<sequence length="253" mass="26980">MRILLSNDDGYLAPGLAALYEALRPLAEVMVMAPEQNCSGASNSLTLSRPLSVSRSATTGFYYVNGTPTDSVHVALTGMLDAKPDLVVSGINNGQNMGDDTLYSGTVAAATEGIMFGVPAIAFSLVHKEWAHLEDAARVAAEIVRHYLDHPLPGQPLLNVNIPNLPYGELRGWRVTRLGKRHPSQPVIRQINPRGEPIYWIGAAGDALDASEGTDFHATAAGYVSITPLQLDLTHTQMLAATRDWAHAGSGAS</sequence>
<name>SURE_BURTA</name>
<dbReference type="EC" id="3.1.3.5" evidence="1"/>
<dbReference type="EMBL" id="CP000086">
    <property type="protein sequence ID" value="ABC37753.1"/>
    <property type="molecule type" value="Genomic_DNA"/>
</dbReference>
<dbReference type="RefSeq" id="WP_009890803.1">
    <property type="nucleotide sequence ID" value="NC_007651.1"/>
</dbReference>
<dbReference type="SMR" id="Q2SWF5"/>
<dbReference type="GeneID" id="45121941"/>
<dbReference type="KEGG" id="bte:BTH_I2223"/>
<dbReference type="HOGENOM" id="CLU_045192_1_2_4"/>
<dbReference type="Proteomes" id="UP000001930">
    <property type="component" value="Chromosome I"/>
</dbReference>
<dbReference type="GO" id="GO:0005737">
    <property type="term" value="C:cytoplasm"/>
    <property type="evidence" value="ECO:0007669"/>
    <property type="project" value="UniProtKB-SubCell"/>
</dbReference>
<dbReference type="GO" id="GO:0008254">
    <property type="term" value="F:3'-nucleotidase activity"/>
    <property type="evidence" value="ECO:0007669"/>
    <property type="project" value="TreeGrafter"/>
</dbReference>
<dbReference type="GO" id="GO:0008253">
    <property type="term" value="F:5'-nucleotidase activity"/>
    <property type="evidence" value="ECO:0007669"/>
    <property type="project" value="UniProtKB-UniRule"/>
</dbReference>
<dbReference type="GO" id="GO:0004309">
    <property type="term" value="F:exopolyphosphatase activity"/>
    <property type="evidence" value="ECO:0007669"/>
    <property type="project" value="TreeGrafter"/>
</dbReference>
<dbReference type="GO" id="GO:0046872">
    <property type="term" value="F:metal ion binding"/>
    <property type="evidence" value="ECO:0007669"/>
    <property type="project" value="UniProtKB-UniRule"/>
</dbReference>
<dbReference type="GO" id="GO:0000166">
    <property type="term" value="F:nucleotide binding"/>
    <property type="evidence" value="ECO:0007669"/>
    <property type="project" value="UniProtKB-KW"/>
</dbReference>
<dbReference type="FunFam" id="3.40.1210.10:FF:000001">
    <property type="entry name" value="5'/3'-nucleotidase SurE"/>
    <property type="match status" value="1"/>
</dbReference>
<dbReference type="Gene3D" id="3.40.1210.10">
    <property type="entry name" value="Survival protein SurE-like phosphatase/nucleotidase"/>
    <property type="match status" value="1"/>
</dbReference>
<dbReference type="HAMAP" id="MF_00060">
    <property type="entry name" value="SurE"/>
    <property type="match status" value="1"/>
</dbReference>
<dbReference type="InterPro" id="IPR030048">
    <property type="entry name" value="SurE"/>
</dbReference>
<dbReference type="InterPro" id="IPR002828">
    <property type="entry name" value="SurE-like_Pase/nucleotidase"/>
</dbReference>
<dbReference type="InterPro" id="IPR036523">
    <property type="entry name" value="SurE-like_sf"/>
</dbReference>
<dbReference type="NCBIfam" id="NF001489">
    <property type="entry name" value="PRK00346.1-3"/>
    <property type="match status" value="1"/>
</dbReference>
<dbReference type="NCBIfam" id="NF001490">
    <property type="entry name" value="PRK00346.1-4"/>
    <property type="match status" value="1"/>
</dbReference>
<dbReference type="NCBIfam" id="TIGR00087">
    <property type="entry name" value="surE"/>
    <property type="match status" value="1"/>
</dbReference>
<dbReference type="PANTHER" id="PTHR30457">
    <property type="entry name" value="5'-NUCLEOTIDASE SURE"/>
    <property type="match status" value="1"/>
</dbReference>
<dbReference type="PANTHER" id="PTHR30457:SF12">
    <property type="entry name" value="5'_3'-NUCLEOTIDASE SURE"/>
    <property type="match status" value="1"/>
</dbReference>
<dbReference type="Pfam" id="PF01975">
    <property type="entry name" value="SurE"/>
    <property type="match status" value="1"/>
</dbReference>
<dbReference type="SUPFAM" id="SSF64167">
    <property type="entry name" value="SurE-like"/>
    <property type="match status" value="1"/>
</dbReference>
<accession>Q2SWF5</accession>
<keyword id="KW-0963">Cytoplasm</keyword>
<keyword id="KW-0378">Hydrolase</keyword>
<keyword id="KW-0479">Metal-binding</keyword>
<keyword id="KW-0547">Nucleotide-binding</keyword>
<feature type="chain" id="PRO_0000235602" description="5'-nucleotidase SurE">
    <location>
        <begin position="1"/>
        <end position="253"/>
    </location>
</feature>
<feature type="binding site" evidence="1">
    <location>
        <position position="8"/>
    </location>
    <ligand>
        <name>a divalent metal cation</name>
        <dbReference type="ChEBI" id="CHEBI:60240"/>
    </ligand>
</feature>
<feature type="binding site" evidence="1">
    <location>
        <position position="9"/>
    </location>
    <ligand>
        <name>a divalent metal cation</name>
        <dbReference type="ChEBI" id="CHEBI:60240"/>
    </ligand>
</feature>
<feature type="binding site" evidence="1">
    <location>
        <position position="39"/>
    </location>
    <ligand>
        <name>a divalent metal cation</name>
        <dbReference type="ChEBI" id="CHEBI:60240"/>
    </ligand>
</feature>
<feature type="binding site" evidence="1">
    <location>
        <position position="92"/>
    </location>
    <ligand>
        <name>a divalent metal cation</name>
        <dbReference type="ChEBI" id="CHEBI:60240"/>
    </ligand>
</feature>
<comment type="function">
    <text evidence="1">Nucleotidase that shows phosphatase activity on nucleoside 5'-monophosphates.</text>
</comment>
<comment type="catalytic activity">
    <reaction evidence="1">
        <text>a ribonucleoside 5'-phosphate + H2O = a ribonucleoside + phosphate</text>
        <dbReference type="Rhea" id="RHEA:12484"/>
        <dbReference type="ChEBI" id="CHEBI:15377"/>
        <dbReference type="ChEBI" id="CHEBI:18254"/>
        <dbReference type="ChEBI" id="CHEBI:43474"/>
        <dbReference type="ChEBI" id="CHEBI:58043"/>
        <dbReference type="EC" id="3.1.3.5"/>
    </reaction>
</comment>
<comment type="cofactor">
    <cofactor evidence="1">
        <name>a divalent metal cation</name>
        <dbReference type="ChEBI" id="CHEBI:60240"/>
    </cofactor>
    <text evidence="1">Binds 1 divalent metal cation per subunit.</text>
</comment>
<comment type="subcellular location">
    <subcellularLocation>
        <location evidence="1">Cytoplasm</location>
    </subcellularLocation>
</comment>
<comment type="similarity">
    <text evidence="1">Belongs to the SurE nucleotidase family.</text>
</comment>
<proteinExistence type="inferred from homology"/>
<organism>
    <name type="scientific">Burkholderia thailandensis (strain ATCC 700388 / DSM 13276 / CCUG 48851 / CIP 106301 / E264)</name>
    <dbReference type="NCBI Taxonomy" id="271848"/>
    <lineage>
        <taxon>Bacteria</taxon>
        <taxon>Pseudomonadati</taxon>
        <taxon>Pseudomonadota</taxon>
        <taxon>Betaproteobacteria</taxon>
        <taxon>Burkholderiales</taxon>
        <taxon>Burkholderiaceae</taxon>
        <taxon>Burkholderia</taxon>
        <taxon>pseudomallei group</taxon>
    </lineage>
</organism>
<evidence type="ECO:0000255" key="1">
    <source>
        <dbReference type="HAMAP-Rule" id="MF_00060"/>
    </source>
</evidence>
<gene>
    <name evidence="1" type="primary">surE</name>
    <name type="ordered locus">BTH_I2223</name>
</gene>
<protein>
    <recommendedName>
        <fullName evidence="1">5'-nucleotidase SurE</fullName>
        <ecNumber evidence="1">3.1.3.5</ecNumber>
    </recommendedName>
    <alternativeName>
        <fullName evidence="1">Nucleoside 5'-monophosphate phosphohydrolase</fullName>
    </alternativeName>
</protein>
<reference key="1">
    <citation type="journal article" date="2005" name="BMC Genomics">
        <title>Bacterial genome adaptation to niches: divergence of the potential virulence genes in three Burkholderia species of different survival strategies.</title>
        <authorList>
            <person name="Kim H.S."/>
            <person name="Schell M.A."/>
            <person name="Yu Y."/>
            <person name="Ulrich R.L."/>
            <person name="Sarria S.H."/>
            <person name="Nierman W.C."/>
            <person name="DeShazer D."/>
        </authorList>
    </citation>
    <scope>NUCLEOTIDE SEQUENCE [LARGE SCALE GENOMIC DNA]</scope>
    <source>
        <strain>ATCC 700388 / DSM 13276 / CCUG 48851 / CIP 106301 / E264</strain>
    </source>
</reference>